<name>ISW1_YEAST</name>
<protein>
    <recommendedName>
        <fullName>ISWI chromatin-remodeling complex ATPase ISW1</fullName>
        <ecNumber>3.6.4.-</ecNumber>
    </recommendedName>
</protein>
<feature type="chain" id="PRO_0000074330" description="ISWI chromatin-remodeling complex ATPase ISW1">
    <location>
        <begin position="1"/>
        <end position="1129"/>
    </location>
</feature>
<feature type="domain" description="Helicase ATP-binding" evidence="1">
    <location>
        <begin position="208"/>
        <end position="373"/>
    </location>
</feature>
<feature type="domain" description="Helicase C-terminal" evidence="2">
    <location>
        <begin position="506"/>
        <end position="657"/>
    </location>
</feature>
<feature type="domain" description="SANT 1" evidence="3">
    <location>
        <begin position="882"/>
        <end position="935"/>
    </location>
</feature>
<feature type="domain" description="SANT 2" evidence="3">
    <location>
        <begin position="988"/>
        <end position="1052"/>
    </location>
</feature>
<feature type="region of interest" description="Disordered" evidence="4">
    <location>
        <begin position="144"/>
        <end position="177"/>
    </location>
</feature>
<feature type="region of interest" description="Disordered" evidence="4">
    <location>
        <begin position="683"/>
        <end position="705"/>
    </location>
</feature>
<feature type="region of interest" description="Disordered" evidence="4">
    <location>
        <begin position="1073"/>
        <end position="1129"/>
    </location>
</feature>
<feature type="short sequence motif" description="DEAH box">
    <location>
        <begin position="324"/>
        <end position="327"/>
    </location>
</feature>
<feature type="compositionally biased region" description="Basic residues" evidence="4">
    <location>
        <begin position="147"/>
        <end position="160"/>
    </location>
</feature>
<feature type="compositionally biased region" description="Acidic residues" evidence="4">
    <location>
        <begin position="164"/>
        <end position="177"/>
    </location>
</feature>
<feature type="compositionally biased region" description="Basic and acidic residues" evidence="4">
    <location>
        <begin position="1073"/>
        <end position="1108"/>
    </location>
</feature>
<feature type="binding site" evidence="1">
    <location>
        <begin position="221"/>
        <end position="228"/>
    </location>
    <ligand>
        <name>ATP</name>
        <dbReference type="ChEBI" id="CHEBI:30616"/>
    </ligand>
</feature>
<feature type="modified residue" description="Phosphothreonine" evidence="12 13">
    <location>
        <position position="694"/>
    </location>
</feature>
<feature type="modified residue" description="Phosphoserine" evidence="12">
    <location>
        <position position="846"/>
    </location>
</feature>
<feature type="mutagenesis site" description="Abolishes ATPase activity." evidence="5">
    <original>K</original>
    <variation>A</variation>
    <location>
        <position position="227"/>
    </location>
</feature>
<feature type="helix" evidence="17">
    <location>
        <begin position="102"/>
        <end position="112"/>
    </location>
</feature>
<feature type="helix" evidence="17">
    <location>
        <begin position="118"/>
        <end position="124"/>
    </location>
</feature>
<feature type="helix" evidence="17">
    <location>
        <begin position="133"/>
        <end position="142"/>
    </location>
</feature>
<feature type="strand" evidence="17">
    <location>
        <begin position="192"/>
        <end position="194"/>
    </location>
</feature>
<feature type="helix" evidence="17">
    <location>
        <begin position="198"/>
        <end position="213"/>
    </location>
</feature>
<feature type="strand" evidence="16">
    <location>
        <begin position="217"/>
        <end position="219"/>
    </location>
</feature>
<feature type="helix" evidence="17">
    <location>
        <begin position="227"/>
        <end position="240"/>
    </location>
</feature>
<feature type="strand" evidence="17">
    <location>
        <begin position="248"/>
        <end position="251"/>
    </location>
</feature>
<feature type="helix" evidence="17">
    <location>
        <begin position="254"/>
        <end position="256"/>
    </location>
</feature>
<feature type="helix" evidence="17">
    <location>
        <begin position="257"/>
        <end position="267"/>
    </location>
</feature>
<feature type="strand" evidence="17">
    <location>
        <begin position="273"/>
        <end position="275"/>
    </location>
</feature>
<feature type="helix" evidence="17">
    <location>
        <begin position="280"/>
        <end position="293"/>
    </location>
</feature>
<feature type="strand" evidence="17">
    <location>
        <begin position="297"/>
        <end position="301"/>
    </location>
</feature>
<feature type="helix" evidence="17">
    <location>
        <begin position="303"/>
        <end position="308"/>
    </location>
</feature>
<feature type="helix" evidence="17">
    <location>
        <begin position="310"/>
        <end position="314"/>
    </location>
</feature>
<feature type="strand" evidence="17">
    <location>
        <begin position="318"/>
        <end position="323"/>
    </location>
</feature>
<feature type="helix" evidence="17">
    <location>
        <begin position="328"/>
        <end position="330"/>
    </location>
</feature>
<feature type="strand" evidence="17">
    <location>
        <begin position="331"/>
        <end position="333"/>
    </location>
</feature>
<feature type="helix" evidence="17">
    <location>
        <begin position="335"/>
        <end position="340"/>
    </location>
</feature>
<feature type="strand" evidence="16">
    <location>
        <begin position="349"/>
        <end position="351"/>
    </location>
</feature>
<feature type="helix" evidence="17">
    <location>
        <begin position="360"/>
        <end position="367"/>
    </location>
</feature>
<feature type="turn" evidence="17">
    <location>
        <begin position="368"/>
        <end position="370"/>
    </location>
</feature>
<feature type="helix" evidence="17">
    <location>
        <begin position="372"/>
        <end position="375"/>
    </location>
</feature>
<feature type="helix" evidence="17">
    <location>
        <begin position="380"/>
        <end position="389"/>
    </location>
</feature>
<feature type="turn" evidence="17">
    <location>
        <begin position="390"/>
        <end position="392"/>
    </location>
</feature>
<feature type="strand" evidence="15">
    <location>
        <begin position="395"/>
        <end position="397"/>
    </location>
</feature>
<feature type="helix" evidence="17">
    <location>
        <begin position="398"/>
        <end position="405"/>
    </location>
</feature>
<feature type="turn" evidence="16">
    <location>
        <begin position="406"/>
        <end position="408"/>
    </location>
</feature>
<feature type="turn" evidence="17">
    <location>
        <begin position="414"/>
        <end position="416"/>
    </location>
</feature>
<feature type="strand" evidence="16">
    <location>
        <begin position="419"/>
        <end position="421"/>
    </location>
</feature>
<feature type="strand" evidence="17">
    <location>
        <begin position="424"/>
        <end position="432"/>
    </location>
</feature>
<feature type="helix" evidence="17">
    <location>
        <begin position="435"/>
        <end position="445"/>
    </location>
</feature>
<feature type="helix" evidence="17">
    <location>
        <begin position="468"/>
        <end position="477"/>
    </location>
</feature>
<feature type="helix" evidence="17">
    <location>
        <begin position="479"/>
        <end position="482"/>
    </location>
</feature>
<feature type="strand" evidence="15">
    <location>
        <begin position="483"/>
        <end position="486"/>
    </location>
</feature>
<feature type="strand" evidence="16">
    <location>
        <begin position="488"/>
        <end position="490"/>
    </location>
</feature>
<feature type="helix" evidence="17">
    <location>
        <begin position="495"/>
        <end position="500"/>
    </location>
</feature>
<feature type="helix" evidence="17">
    <location>
        <begin position="502"/>
        <end position="517"/>
    </location>
</feature>
<feature type="strand" evidence="17">
    <location>
        <begin position="521"/>
        <end position="526"/>
    </location>
</feature>
<feature type="helix" evidence="17">
    <location>
        <begin position="528"/>
        <end position="541"/>
    </location>
</feature>
<feature type="helix" evidence="17">
    <location>
        <begin position="555"/>
        <end position="565"/>
    </location>
</feature>
<feature type="strand" evidence="17">
    <location>
        <begin position="575"/>
        <end position="578"/>
    </location>
</feature>
<feature type="turn" evidence="17">
    <location>
        <begin position="579"/>
        <end position="581"/>
    </location>
</feature>
<feature type="strand" evidence="16">
    <location>
        <begin position="582"/>
        <end position="584"/>
    </location>
</feature>
<feature type="strand" evidence="17">
    <location>
        <begin position="592"/>
        <end position="597"/>
    </location>
</feature>
<feature type="helix" evidence="17">
    <location>
        <begin position="602"/>
        <end position="609"/>
    </location>
</feature>
<feature type="strand" evidence="17">
    <location>
        <begin position="612"/>
        <end position="614"/>
    </location>
</feature>
<feature type="strand" evidence="17">
    <location>
        <begin position="621"/>
        <end position="629"/>
    </location>
</feature>
<feature type="helix" evidence="17">
    <location>
        <begin position="632"/>
        <end position="656"/>
    </location>
</feature>
<feature type="helix" evidence="14">
    <location>
        <begin position="814"/>
        <end position="827"/>
    </location>
</feature>
<feature type="turn" evidence="14">
    <location>
        <begin position="828"/>
        <end position="830"/>
    </location>
</feature>
<feature type="helix" evidence="14">
    <location>
        <begin position="835"/>
        <end position="838"/>
    </location>
</feature>
<feature type="turn" evidence="14">
    <location>
        <begin position="839"/>
        <end position="841"/>
    </location>
</feature>
<feature type="turn" evidence="14">
    <location>
        <begin position="848"/>
        <end position="850"/>
    </location>
</feature>
<feature type="helix" evidence="14">
    <location>
        <begin position="851"/>
        <end position="862"/>
    </location>
</feature>
<feature type="strand" evidence="14">
    <location>
        <begin position="866"/>
        <end position="868"/>
    </location>
</feature>
<feature type="helix" evidence="14">
    <location>
        <begin position="870"/>
        <end position="882"/>
    </location>
</feature>
<feature type="helix" evidence="14">
    <location>
        <begin position="889"/>
        <end position="902"/>
    </location>
</feature>
<feature type="helix" evidence="14">
    <location>
        <begin position="907"/>
        <end position="911"/>
    </location>
</feature>
<feature type="strand" evidence="14">
    <location>
        <begin position="917"/>
        <end position="919"/>
    </location>
</feature>
<feature type="helix" evidence="14">
    <location>
        <begin position="920"/>
        <end position="932"/>
    </location>
</feature>
<feature type="turn" evidence="14">
    <location>
        <begin position="941"/>
        <end position="943"/>
    </location>
</feature>
<feature type="helix" evidence="14">
    <location>
        <begin position="944"/>
        <end position="968"/>
    </location>
</feature>
<feature type="helix" evidence="14">
    <location>
        <begin position="974"/>
        <end position="977"/>
    </location>
</feature>
<feature type="helix" evidence="14">
    <location>
        <begin position="994"/>
        <end position="1007"/>
    </location>
</feature>
<feature type="helix" evidence="14">
    <location>
        <begin position="1015"/>
        <end position="1024"/>
    </location>
</feature>
<feature type="helix" evidence="14">
    <location>
        <begin position="1027"/>
        <end position="1029"/>
    </location>
</feature>
<feature type="helix" evidence="14">
    <location>
        <begin position="1032"/>
        <end position="1035"/>
    </location>
</feature>
<feature type="helix" evidence="14">
    <location>
        <begin position="1039"/>
        <end position="1054"/>
    </location>
</feature>
<feature type="turn" evidence="14">
    <location>
        <begin position="1055"/>
        <end position="1058"/>
    </location>
</feature>
<comment type="function">
    <text evidence="5 6 7 10">Catalytic component of ISW1-type complexes, which act by remodeling the chromatin by catalyzing an ATP-dependent alteration in the structure of nucleosomal DNA. They are involved in coordinating transcriptional repression, activation and elongation phases. The ISW1A complex represses gene expression at initiation through specific positioning of a promoter proximal dinucleosome. The ISW1B complex acts within coding regions to control the amount of RNA polymerase II released into productive elongation and to coordinate elongation with termination and pre-mRNA processing.</text>
</comment>
<comment type="subunit">
    <text evidence="5 7">Component of the ISW1A complex, which at least consists of ISW1 and IOC3. Component of the ISW1B complex, which at least consists of ISW1, IOC2 and IOC4.</text>
</comment>
<comment type="interaction">
    <interactant intactId="EBI-21087">
        <id>P38144</id>
    </interactant>
    <interactant intactId="EBI-30191">
        <id>Q12072</id>
        <label>IOC2</label>
    </interactant>
    <organismsDiffer>false</organismsDiffer>
    <experiments>7</experiments>
</comment>
<comment type="interaction">
    <interactant intactId="EBI-21087">
        <id>P38144</id>
    </interactant>
    <interactant intactId="EBI-22944">
        <id>P43596</id>
        <label>IOC3</label>
    </interactant>
    <organismsDiffer>false</organismsDiffer>
    <experiments>12</experiments>
</comment>
<comment type="subcellular location">
    <subcellularLocation>
        <location evidence="3 8">Nucleus</location>
    </subcellularLocation>
</comment>
<comment type="miscellaneous">
    <text evidence="9">Present with 1500 molecules/cell in log phase SD medium.</text>
</comment>
<comment type="similarity">
    <text evidence="11">Belongs to the SNF2/RAD54 helicase family. ISWI subfamily.</text>
</comment>
<keyword id="KW-0002">3D-structure</keyword>
<keyword id="KW-0067">ATP-binding</keyword>
<keyword id="KW-0156">Chromatin regulator</keyword>
<keyword id="KW-0238">DNA-binding</keyword>
<keyword id="KW-0347">Helicase</keyword>
<keyword id="KW-0378">Hydrolase</keyword>
<keyword id="KW-0547">Nucleotide-binding</keyword>
<keyword id="KW-0539">Nucleus</keyword>
<keyword id="KW-0597">Phosphoprotein</keyword>
<keyword id="KW-1185">Reference proteome</keyword>
<keyword id="KW-0677">Repeat</keyword>
<keyword id="KW-0678">Repressor</keyword>
<keyword id="KW-0804">Transcription</keyword>
<keyword id="KW-0805">Transcription regulation</keyword>
<accession>P38144</accession>
<accession>D6VQP1</accession>
<proteinExistence type="evidence at protein level"/>
<dbReference type="EC" id="3.6.4.-"/>
<dbReference type="EMBL" id="Z36114">
    <property type="protein sequence ID" value="CAA85208.1"/>
    <property type="molecule type" value="Genomic_DNA"/>
</dbReference>
<dbReference type="EMBL" id="BK006936">
    <property type="protein sequence ID" value="DAA07361.1"/>
    <property type="molecule type" value="Genomic_DNA"/>
</dbReference>
<dbReference type="PIR" id="S46122">
    <property type="entry name" value="S46122"/>
</dbReference>
<dbReference type="RefSeq" id="NP_009804.1">
    <property type="nucleotide sequence ID" value="NM_001178593.1"/>
</dbReference>
<dbReference type="PDB" id="2Y9Y">
    <property type="method" value="X-ray"/>
    <property type="resolution" value="3.25 A"/>
    <property type="chains" value="A=763-1129"/>
</dbReference>
<dbReference type="PDB" id="2Y9Z">
    <property type="method" value="X-ray"/>
    <property type="resolution" value="3.60 A"/>
    <property type="chains" value="A=763-1129"/>
</dbReference>
<dbReference type="PDB" id="6IRO">
    <property type="method" value="EM"/>
    <property type="resolution" value="3.40 A"/>
    <property type="chains" value="L=69-1129"/>
</dbReference>
<dbReference type="PDB" id="6JYL">
    <property type="method" value="EM"/>
    <property type="resolution" value="3.37 A"/>
    <property type="chains" value="K=69-1129"/>
</dbReference>
<dbReference type="PDB" id="6K1P">
    <property type="method" value="EM"/>
    <property type="resolution" value="3.87 A"/>
    <property type="chains" value="K=69-1129"/>
</dbReference>
<dbReference type="PDB" id="7X3T">
    <property type="method" value="EM"/>
    <property type="resolution" value="5.40 A"/>
    <property type="chains" value="V=68-1129"/>
</dbReference>
<dbReference type="PDB" id="7X3W">
    <property type="method" value="EM"/>
    <property type="resolution" value="3.10 A"/>
    <property type="chains" value="K=68-1129"/>
</dbReference>
<dbReference type="PDB" id="7X3X">
    <property type="method" value="EM"/>
    <property type="resolution" value="3.20 A"/>
    <property type="chains" value="V=68-1129"/>
</dbReference>
<dbReference type="PDBsum" id="2Y9Y"/>
<dbReference type="PDBsum" id="2Y9Z"/>
<dbReference type="PDBsum" id="6IRO"/>
<dbReference type="PDBsum" id="6JYL"/>
<dbReference type="PDBsum" id="6K1P"/>
<dbReference type="PDBsum" id="7X3T"/>
<dbReference type="PDBsum" id="7X3W"/>
<dbReference type="PDBsum" id="7X3X"/>
<dbReference type="EMDB" id="EMD-32992"/>
<dbReference type="EMDB" id="EMD-32995"/>
<dbReference type="EMDB" id="EMD-32996"/>
<dbReference type="EMDB" id="EMD-9718"/>
<dbReference type="EMDB" id="EMD-9719"/>
<dbReference type="EMDB" id="EMD-9720"/>
<dbReference type="SMR" id="P38144"/>
<dbReference type="BioGRID" id="32940">
    <property type="interactions" value="1909"/>
</dbReference>
<dbReference type="ComplexPortal" id="CPX-636">
    <property type="entry name" value="ISW1b chromatin remodeling complex"/>
</dbReference>
<dbReference type="ComplexPortal" id="CPX-637">
    <property type="entry name" value="ISW1a chromatin remodeling complex"/>
</dbReference>
<dbReference type="DIP" id="DIP-6601N"/>
<dbReference type="FunCoup" id="P38144">
    <property type="interactions" value="1370"/>
</dbReference>
<dbReference type="IntAct" id="P38144">
    <property type="interactions" value="83"/>
</dbReference>
<dbReference type="MINT" id="P38144"/>
<dbReference type="STRING" id="4932.YBR245C"/>
<dbReference type="GlyGen" id="P38144">
    <property type="glycosylation" value="3 sites, 1 O-linked glycan (2 sites)"/>
</dbReference>
<dbReference type="iPTMnet" id="P38144"/>
<dbReference type="PaxDb" id="4932-YBR245C"/>
<dbReference type="PeptideAtlas" id="P38144"/>
<dbReference type="EnsemblFungi" id="YBR245C_mRNA">
    <property type="protein sequence ID" value="YBR245C"/>
    <property type="gene ID" value="YBR245C"/>
</dbReference>
<dbReference type="GeneID" id="852547"/>
<dbReference type="KEGG" id="sce:YBR245C"/>
<dbReference type="AGR" id="SGD:S000000449"/>
<dbReference type="SGD" id="S000000449">
    <property type="gene designation" value="ISW1"/>
</dbReference>
<dbReference type="VEuPathDB" id="FungiDB:YBR245C"/>
<dbReference type="eggNOG" id="KOG0385">
    <property type="taxonomic scope" value="Eukaryota"/>
</dbReference>
<dbReference type="GeneTree" id="ENSGT00940000176603"/>
<dbReference type="HOGENOM" id="CLU_000315_0_2_1"/>
<dbReference type="InParanoid" id="P38144"/>
<dbReference type="OMA" id="EFQFRES"/>
<dbReference type="OrthoDB" id="5857104at2759"/>
<dbReference type="BioCyc" id="YEAST:G3O-29174-MONOMER"/>
<dbReference type="BioGRID-ORCS" id="852547">
    <property type="hits" value="0 hits in 10 CRISPR screens"/>
</dbReference>
<dbReference type="EvolutionaryTrace" id="P38144"/>
<dbReference type="PRO" id="PR:P38144"/>
<dbReference type="Proteomes" id="UP000002311">
    <property type="component" value="Chromosome II"/>
</dbReference>
<dbReference type="RNAct" id="P38144">
    <property type="molecule type" value="protein"/>
</dbReference>
<dbReference type="GO" id="GO:0000785">
    <property type="term" value="C:chromatin"/>
    <property type="evidence" value="ECO:0000318"/>
    <property type="project" value="GO_Central"/>
</dbReference>
<dbReference type="GO" id="GO:0016587">
    <property type="term" value="C:Isw1 complex"/>
    <property type="evidence" value="ECO:0000353"/>
    <property type="project" value="ComplexPortal"/>
</dbReference>
<dbReference type="GO" id="GO:0036436">
    <property type="term" value="C:Isw1a complex"/>
    <property type="evidence" value="ECO:0000314"/>
    <property type="project" value="SGD"/>
</dbReference>
<dbReference type="GO" id="GO:0036437">
    <property type="term" value="C:Isw1b complex"/>
    <property type="evidence" value="ECO:0000314"/>
    <property type="project" value="SGD"/>
</dbReference>
<dbReference type="GO" id="GO:0030874">
    <property type="term" value="C:nucleolar chromatin"/>
    <property type="evidence" value="ECO:0000314"/>
    <property type="project" value="SGD"/>
</dbReference>
<dbReference type="GO" id="GO:0005634">
    <property type="term" value="C:nucleus"/>
    <property type="evidence" value="ECO:0000314"/>
    <property type="project" value="SGD"/>
</dbReference>
<dbReference type="GO" id="GO:0005524">
    <property type="term" value="F:ATP binding"/>
    <property type="evidence" value="ECO:0007669"/>
    <property type="project" value="UniProtKB-KW"/>
</dbReference>
<dbReference type="GO" id="GO:0003682">
    <property type="term" value="F:chromatin binding"/>
    <property type="evidence" value="ECO:0000318"/>
    <property type="project" value="GO_Central"/>
</dbReference>
<dbReference type="GO" id="GO:0004386">
    <property type="term" value="F:helicase activity"/>
    <property type="evidence" value="ECO:0007669"/>
    <property type="project" value="UniProtKB-KW"/>
</dbReference>
<dbReference type="GO" id="GO:0016787">
    <property type="term" value="F:hydrolase activity"/>
    <property type="evidence" value="ECO:0007669"/>
    <property type="project" value="UniProtKB-KW"/>
</dbReference>
<dbReference type="GO" id="GO:0003730">
    <property type="term" value="F:mRNA 3'-UTR binding"/>
    <property type="evidence" value="ECO:0000314"/>
    <property type="project" value="SGD"/>
</dbReference>
<dbReference type="GO" id="GO:0140750">
    <property type="term" value="F:nucleosome array spacer activity"/>
    <property type="evidence" value="ECO:0000318"/>
    <property type="project" value="GO_Central"/>
</dbReference>
<dbReference type="GO" id="GO:0031491">
    <property type="term" value="F:nucleosome binding"/>
    <property type="evidence" value="ECO:0007669"/>
    <property type="project" value="InterPro"/>
</dbReference>
<dbReference type="GO" id="GO:0000182">
    <property type="term" value="F:rDNA binding"/>
    <property type="evidence" value="ECO:0000314"/>
    <property type="project" value="SGD"/>
</dbReference>
<dbReference type="GO" id="GO:0000976">
    <property type="term" value="F:transcription cis-regulatory region binding"/>
    <property type="evidence" value="ECO:0000314"/>
    <property type="project" value="SGD"/>
</dbReference>
<dbReference type="GO" id="GO:0006338">
    <property type="term" value="P:chromatin remodeling"/>
    <property type="evidence" value="ECO:0000314"/>
    <property type="project" value="ComplexPortal"/>
</dbReference>
<dbReference type="GO" id="GO:0006354">
    <property type="term" value="P:DNA-templated transcription elongation"/>
    <property type="evidence" value="ECO:0000314"/>
    <property type="project" value="SGD"/>
</dbReference>
<dbReference type="GO" id="GO:1903895">
    <property type="term" value="P:negative regulation of IRE1-mediated unfolded protein response"/>
    <property type="evidence" value="ECO:0000315"/>
    <property type="project" value="SGD"/>
</dbReference>
<dbReference type="GO" id="GO:0046832">
    <property type="term" value="P:negative regulation of RNA export from nucleus"/>
    <property type="evidence" value="ECO:0000315"/>
    <property type="project" value="SGD"/>
</dbReference>
<dbReference type="GO" id="GO:0045944">
    <property type="term" value="P:positive regulation of transcription by RNA polymerase II"/>
    <property type="evidence" value="ECO:0000315"/>
    <property type="project" value="SGD"/>
</dbReference>
<dbReference type="GO" id="GO:1902275">
    <property type="term" value="P:regulation of chromatin organization"/>
    <property type="evidence" value="ECO:0000315"/>
    <property type="project" value="SGD"/>
</dbReference>
<dbReference type="GO" id="GO:0006355">
    <property type="term" value="P:regulation of DNA-templated transcription"/>
    <property type="evidence" value="ECO:0000303"/>
    <property type="project" value="ComplexPortal"/>
</dbReference>
<dbReference type="GO" id="GO:0001178">
    <property type="term" value="P:regulation of transcriptional start site selection at RNA polymerase II promoter"/>
    <property type="evidence" value="ECO:0000316"/>
    <property type="project" value="SGD"/>
</dbReference>
<dbReference type="GO" id="GO:0009408">
    <property type="term" value="P:response to heat"/>
    <property type="evidence" value="ECO:0000303"/>
    <property type="project" value="ComplexPortal"/>
</dbReference>
<dbReference type="GO" id="GO:0007062">
    <property type="term" value="P:sister chromatid cohesion"/>
    <property type="evidence" value="ECO:0000315"/>
    <property type="project" value="SGD"/>
</dbReference>
<dbReference type="GO" id="GO:0006363">
    <property type="term" value="P:termination of RNA polymerase I transcription"/>
    <property type="evidence" value="ECO:0000316"/>
    <property type="project" value="SGD"/>
</dbReference>
<dbReference type="GO" id="GO:0006369">
    <property type="term" value="P:termination of RNA polymerase II transcription"/>
    <property type="evidence" value="ECO:0000316"/>
    <property type="project" value="SGD"/>
</dbReference>
<dbReference type="CDD" id="cd17997">
    <property type="entry name" value="DEXHc_SMARCA1_SMARCA5"/>
    <property type="match status" value="1"/>
</dbReference>
<dbReference type="CDD" id="cd00167">
    <property type="entry name" value="SANT"/>
    <property type="match status" value="1"/>
</dbReference>
<dbReference type="CDD" id="cd18793">
    <property type="entry name" value="SF2_C_SNF"/>
    <property type="match status" value="1"/>
</dbReference>
<dbReference type="FunFam" id="3.40.50.300:FF:000082">
    <property type="entry name" value="ISWI chromatin remodeling complex ATPase ISW1"/>
    <property type="match status" value="1"/>
</dbReference>
<dbReference type="FunFam" id="3.40.50.10810:FF:000002">
    <property type="entry name" value="ISWI chromatin-remodeling complex ATPase CHR11 isoform A"/>
    <property type="match status" value="1"/>
</dbReference>
<dbReference type="FunFam" id="1.10.10.60:FF:000234">
    <property type="entry name" value="ISWI chromatin-remodeling complex ATPase ISW2"/>
    <property type="match status" value="1"/>
</dbReference>
<dbReference type="FunFam" id="1.10.1040.30:FF:000003">
    <property type="entry name" value="ISWI chromatin-remodeling complex ATPase ISW2"/>
    <property type="match status" value="1"/>
</dbReference>
<dbReference type="Gene3D" id="1.10.10.60">
    <property type="entry name" value="Homeodomain-like"/>
    <property type="match status" value="2"/>
</dbReference>
<dbReference type="Gene3D" id="1.20.5.1190">
    <property type="entry name" value="iswi atpase"/>
    <property type="match status" value="1"/>
</dbReference>
<dbReference type="Gene3D" id="1.10.1040.30">
    <property type="entry name" value="ISWI, HAND domain"/>
    <property type="match status" value="1"/>
</dbReference>
<dbReference type="Gene3D" id="3.40.50.300">
    <property type="entry name" value="P-loop containing nucleotide triphosphate hydrolases"/>
    <property type="match status" value="1"/>
</dbReference>
<dbReference type="Gene3D" id="3.40.50.10810">
    <property type="entry name" value="Tandem AAA-ATPase domain"/>
    <property type="match status" value="1"/>
</dbReference>
<dbReference type="InterPro" id="IPR014001">
    <property type="entry name" value="Helicase_ATP-bd"/>
</dbReference>
<dbReference type="InterPro" id="IPR001650">
    <property type="entry name" value="Helicase_C-like"/>
</dbReference>
<dbReference type="InterPro" id="IPR009057">
    <property type="entry name" value="Homeodomain-like_sf"/>
</dbReference>
<dbReference type="InterPro" id="IPR044754">
    <property type="entry name" value="Isw1/2_DEXHc"/>
</dbReference>
<dbReference type="InterPro" id="IPR015194">
    <property type="entry name" value="ISWI_HAND-dom"/>
</dbReference>
<dbReference type="InterPro" id="IPR036306">
    <property type="entry name" value="ISWI_HAND-dom_sf"/>
</dbReference>
<dbReference type="InterPro" id="IPR027417">
    <property type="entry name" value="P-loop_NTPase"/>
</dbReference>
<dbReference type="InterPro" id="IPR001005">
    <property type="entry name" value="SANT/Myb"/>
</dbReference>
<dbReference type="InterPro" id="IPR017884">
    <property type="entry name" value="SANT_dom"/>
</dbReference>
<dbReference type="InterPro" id="IPR015195">
    <property type="entry name" value="SLIDE"/>
</dbReference>
<dbReference type="InterPro" id="IPR038718">
    <property type="entry name" value="SNF2-like_sf"/>
</dbReference>
<dbReference type="InterPro" id="IPR049730">
    <property type="entry name" value="SNF2/RAD54-like_C"/>
</dbReference>
<dbReference type="InterPro" id="IPR000330">
    <property type="entry name" value="SNF2_N"/>
</dbReference>
<dbReference type="PANTHER" id="PTHR45623">
    <property type="entry name" value="CHROMODOMAIN-HELICASE-DNA-BINDING PROTEIN 3-RELATED-RELATED"/>
    <property type="match status" value="1"/>
</dbReference>
<dbReference type="PANTHER" id="PTHR45623:SF49">
    <property type="entry name" value="SWI_SNF-RELATED MATRIX-ASSOCIATED ACTIN-DEPENDENT REGULATOR OF CHROMATIN SUBFAMILY A MEMBER 5"/>
    <property type="match status" value="1"/>
</dbReference>
<dbReference type="Pfam" id="PF09110">
    <property type="entry name" value="HAND"/>
    <property type="match status" value="1"/>
</dbReference>
<dbReference type="Pfam" id="PF00271">
    <property type="entry name" value="Helicase_C"/>
    <property type="match status" value="1"/>
</dbReference>
<dbReference type="Pfam" id="PF09111">
    <property type="entry name" value="SLIDE"/>
    <property type="match status" value="1"/>
</dbReference>
<dbReference type="Pfam" id="PF00176">
    <property type="entry name" value="SNF2-rel_dom"/>
    <property type="match status" value="1"/>
</dbReference>
<dbReference type="SMART" id="SM00487">
    <property type="entry name" value="DEXDc"/>
    <property type="match status" value="1"/>
</dbReference>
<dbReference type="SMART" id="SM00490">
    <property type="entry name" value="HELICc"/>
    <property type="match status" value="1"/>
</dbReference>
<dbReference type="SMART" id="SM00717">
    <property type="entry name" value="SANT"/>
    <property type="match status" value="2"/>
</dbReference>
<dbReference type="SUPFAM" id="SSF101224">
    <property type="entry name" value="HAND domain of the nucleosome remodeling ATPase ISWI"/>
    <property type="match status" value="1"/>
</dbReference>
<dbReference type="SUPFAM" id="SSF46689">
    <property type="entry name" value="Homeodomain-like"/>
    <property type="match status" value="2"/>
</dbReference>
<dbReference type="SUPFAM" id="SSF52540">
    <property type="entry name" value="P-loop containing nucleoside triphosphate hydrolases"/>
    <property type="match status" value="2"/>
</dbReference>
<dbReference type="PROSITE" id="PS51192">
    <property type="entry name" value="HELICASE_ATP_BIND_1"/>
    <property type="match status" value="1"/>
</dbReference>
<dbReference type="PROSITE" id="PS51194">
    <property type="entry name" value="HELICASE_CTER"/>
    <property type="match status" value="1"/>
</dbReference>
<dbReference type="PROSITE" id="PS51293">
    <property type="entry name" value="SANT"/>
    <property type="match status" value="1"/>
</dbReference>
<reference key="1">
    <citation type="journal article" date="1994" name="EMBO J.">
        <title>Complete DNA sequence of yeast chromosome II.</title>
        <authorList>
            <person name="Feldmann H."/>
            <person name="Aigle M."/>
            <person name="Aljinovic G."/>
            <person name="Andre B."/>
            <person name="Baclet M.C."/>
            <person name="Barthe C."/>
            <person name="Baur A."/>
            <person name="Becam A.-M."/>
            <person name="Biteau N."/>
            <person name="Boles E."/>
            <person name="Brandt T."/>
            <person name="Brendel M."/>
            <person name="Brueckner M."/>
            <person name="Bussereau F."/>
            <person name="Christiansen C."/>
            <person name="Contreras R."/>
            <person name="Crouzet M."/>
            <person name="Cziepluch C."/>
            <person name="Demolis N."/>
            <person name="Delaveau T."/>
            <person name="Doignon F."/>
            <person name="Domdey H."/>
            <person name="Duesterhus S."/>
            <person name="Dubois E."/>
            <person name="Dujon B."/>
            <person name="El Bakkoury M."/>
            <person name="Entian K.-D."/>
            <person name="Feuermann M."/>
            <person name="Fiers W."/>
            <person name="Fobo G.M."/>
            <person name="Fritz C."/>
            <person name="Gassenhuber J."/>
            <person name="Glansdorff N."/>
            <person name="Goffeau A."/>
            <person name="Grivell L.A."/>
            <person name="de Haan M."/>
            <person name="Hein C."/>
            <person name="Herbert C.J."/>
            <person name="Hollenberg C.P."/>
            <person name="Holmstroem K."/>
            <person name="Jacq C."/>
            <person name="Jacquet M."/>
            <person name="Jauniaux J.-C."/>
            <person name="Jonniaux J.-L."/>
            <person name="Kallesoee T."/>
            <person name="Kiesau P."/>
            <person name="Kirchrath L."/>
            <person name="Koetter P."/>
            <person name="Korol S."/>
            <person name="Liebl S."/>
            <person name="Logghe M."/>
            <person name="Lohan A.J.E."/>
            <person name="Louis E.J."/>
            <person name="Li Z.Y."/>
            <person name="Maat M.J."/>
            <person name="Mallet L."/>
            <person name="Mannhaupt G."/>
            <person name="Messenguy F."/>
            <person name="Miosga T."/>
            <person name="Molemans F."/>
            <person name="Mueller S."/>
            <person name="Nasr F."/>
            <person name="Obermaier B."/>
            <person name="Perea J."/>
            <person name="Pierard A."/>
            <person name="Piravandi E."/>
            <person name="Pohl F.M."/>
            <person name="Pohl T.M."/>
            <person name="Potier S."/>
            <person name="Proft M."/>
            <person name="Purnelle B."/>
            <person name="Ramezani Rad M."/>
            <person name="Rieger M."/>
            <person name="Rose M."/>
            <person name="Schaaff-Gerstenschlaeger I."/>
            <person name="Scherens B."/>
            <person name="Schwarzlose C."/>
            <person name="Skala J."/>
            <person name="Slonimski P.P."/>
            <person name="Smits P.H.M."/>
            <person name="Souciet J.-L."/>
            <person name="Steensma H.Y."/>
            <person name="Stucka R."/>
            <person name="Urrestarazu L.A."/>
            <person name="van der Aart Q.J.M."/>
            <person name="Van Dyck L."/>
            <person name="Vassarotti A."/>
            <person name="Vetter I."/>
            <person name="Vierendeels F."/>
            <person name="Vissers S."/>
            <person name="Wagner G."/>
            <person name="de Wergifosse P."/>
            <person name="Wolfe K.H."/>
            <person name="Zagulski M."/>
            <person name="Zimmermann F.K."/>
            <person name="Mewes H.-W."/>
            <person name="Kleine K."/>
        </authorList>
    </citation>
    <scope>NUCLEOTIDE SEQUENCE [LARGE SCALE GENOMIC DNA]</scope>
    <source>
        <strain>ATCC 204508 / S288c</strain>
    </source>
</reference>
<reference key="2">
    <citation type="submission" date="1997-03" db="EMBL/GenBank/DDBJ databases">
        <authorList>
            <person name="Aljinovic G."/>
            <person name="Pohl F.M."/>
            <person name="Pohl T.M."/>
        </authorList>
    </citation>
    <scope>SEQUENCE REVISION</scope>
</reference>
<reference key="3">
    <citation type="journal article" date="2014" name="G3 (Bethesda)">
        <title>The reference genome sequence of Saccharomyces cerevisiae: Then and now.</title>
        <authorList>
            <person name="Engel S.R."/>
            <person name="Dietrich F.S."/>
            <person name="Fisk D.G."/>
            <person name="Binkley G."/>
            <person name="Balakrishnan R."/>
            <person name="Costanzo M.C."/>
            <person name="Dwight S.S."/>
            <person name="Hitz B.C."/>
            <person name="Karra K."/>
            <person name="Nash R.S."/>
            <person name="Weng S."/>
            <person name="Wong E.D."/>
            <person name="Lloyd P."/>
            <person name="Skrzypek M.S."/>
            <person name="Miyasato S.R."/>
            <person name="Simison M."/>
            <person name="Cherry J.M."/>
        </authorList>
    </citation>
    <scope>GENOME REANNOTATION</scope>
    <source>
        <strain>ATCC 204508 / S288c</strain>
    </source>
</reference>
<reference key="4">
    <citation type="journal article" date="1999" name="Genes Dev.">
        <title>Characterization of the imitation switch subfamily of ATP-dependent chromatin-remodeling factors in Saccharomyces cerevisiae.</title>
        <authorList>
            <person name="Tsukiyama T."/>
            <person name="Palmer J."/>
            <person name="Landel C.C."/>
            <person name="Shiloach J."/>
            <person name="Wu C."/>
        </authorList>
    </citation>
    <scope>FUNCTION</scope>
    <scope>IDENTIFICATION IN AN ISW1-TYPE COMPLEX</scope>
    <scope>MUTAGENESIS OF LYS-227</scope>
</reference>
<reference key="5">
    <citation type="journal article" date="2001" name="Genes Dev.">
        <title>In vivo chromatin remodeling by yeast ISWI homologs Isw1p and Isw2p.</title>
        <authorList>
            <person name="Kent N.A."/>
            <person name="Karabetsou N."/>
            <person name="Politis P.K."/>
            <person name="Mellor J."/>
        </authorList>
    </citation>
    <scope>FUNCTION</scope>
</reference>
<reference key="6">
    <citation type="journal article" date="2003" name="Cell">
        <title>Isw1 chromatin remodeling ATPase coordinates transcription elongation and termination by RNA polymerase II.</title>
        <authorList>
            <person name="Morillon A."/>
            <person name="Karabetsou N."/>
            <person name="O'Sullivan J."/>
            <person name="Kent N."/>
            <person name="Proudfoot N."/>
            <person name="Mellor J."/>
        </authorList>
    </citation>
    <scope>FUNCTION OF THE ISW1A COMPLEX</scope>
    <scope>FUNCTION OF THE ISW1B COMPLEX</scope>
</reference>
<reference key="7">
    <citation type="journal article" date="2003" name="Mol. Cell. Biol.">
        <title>Yeast Isw1p forms two separable complexes in vivo.</title>
        <authorList>
            <person name="Vary J.C. Jr."/>
            <person name="Gangaraju V.K."/>
            <person name="Qin J."/>
            <person name="Landel C.C."/>
            <person name="Kooperberg C."/>
            <person name="Bartholomew B."/>
            <person name="Tsukiyama T."/>
        </authorList>
    </citation>
    <scope>IDENTIFICATION IN ISW1-TYPE COMPLEXES</scope>
    <scope>FUNCTION OF THE ISW1A COMPLEX</scope>
    <scope>FUNCTION OF THE ISW1B COMPLEX</scope>
</reference>
<reference key="8">
    <citation type="journal article" date="2003" name="Nature">
        <title>Global analysis of protein localization in budding yeast.</title>
        <authorList>
            <person name="Huh W.-K."/>
            <person name="Falvo J.V."/>
            <person name="Gerke L.C."/>
            <person name="Carroll A.S."/>
            <person name="Howson R.W."/>
            <person name="Weissman J.S."/>
            <person name="O'Shea E.K."/>
        </authorList>
    </citation>
    <scope>SUBCELLULAR LOCATION [LARGE SCALE ANALYSIS]</scope>
</reference>
<reference key="9">
    <citation type="journal article" date="2003" name="Nature">
        <title>Global analysis of protein expression in yeast.</title>
        <authorList>
            <person name="Ghaemmaghami S."/>
            <person name="Huh W.-K."/>
            <person name="Bower K."/>
            <person name="Howson R.W."/>
            <person name="Belle A."/>
            <person name="Dephoure N."/>
            <person name="O'Shea E.K."/>
            <person name="Weissman J.S."/>
        </authorList>
    </citation>
    <scope>LEVEL OF PROTEIN EXPRESSION [LARGE SCALE ANALYSIS]</scope>
</reference>
<reference key="10">
    <citation type="journal article" date="2007" name="J. Proteome Res.">
        <title>Large-scale phosphorylation analysis of alpha-factor-arrested Saccharomyces cerevisiae.</title>
        <authorList>
            <person name="Li X."/>
            <person name="Gerber S.A."/>
            <person name="Rudner A.D."/>
            <person name="Beausoleil S.A."/>
            <person name="Haas W."/>
            <person name="Villen J."/>
            <person name="Elias J.E."/>
            <person name="Gygi S.P."/>
        </authorList>
    </citation>
    <scope>IDENTIFICATION BY MASS SPECTROMETRY [LARGE SCALE ANALYSIS]</scope>
    <source>
        <strain>ADR376</strain>
    </source>
</reference>
<reference key="11">
    <citation type="journal article" date="2008" name="Mol. Cell. Proteomics">
        <title>A multidimensional chromatography technology for in-depth phosphoproteome analysis.</title>
        <authorList>
            <person name="Albuquerque C.P."/>
            <person name="Smolka M.B."/>
            <person name="Payne S.H."/>
            <person name="Bafna V."/>
            <person name="Eng J."/>
            <person name="Zhou H."/>
        </authorList>
    </citation>
    <scope>PHOSPHORYLATION [LARGE SCALE ANALYSIS] AT THR-694 AND SER-846</scope>
    <scope>IDENTIFICATION BY MASS SPECTROMETRY [LARGE SCALE ANALYSIS]</scope>
</reference>
<reference key="12">
    <citation type="journal article" date="2009" name="Science">
        <title>Global analysis of Cdk1 substrate phosphorylation sites provides insights into evolution.</title>
        <authorList>
            <person name="Holt L.J."/>
            <person name="Tuch B.B."/>
            <person name="Villen J."/>
            <person name="Johnson A.D."/>
            <person name="Gygi S.P."/>
            <person name="Morgan D.O."/>
        </authorList>
    </citation>
    <scope>PHOSPHORYLATION [LARGE SCALE ANALYSIS] AT THR-694</scope>
    <scope>IDENTIFICATION BY MASS SPECTROMETRY [LARGE SCALE ANALYSIS]</scope>
</reference>
<sequence length="1129" mass="131102">MAYMLAIANFHFFKFYTRMRKKHENNSCNEKDKDENLFKIILAIFLQEKKKYDCISSGSIMTASEEYLENLKPFQVGLPPHDPESNKKRYLLKDANGKKFDLEGTTKRFEHLLSLSGLFKHFIESKAAKDPKFRQVLDVLEENKANGKGKGKHQDVRRRKTEHEEDAELLKEEDSDDDESIEFQFRESPAYVNGQLRPYQIQGVNWLVSLHKNKIAGILADEMGLGKTLQTISFLGYLRYIEKIPGPFLVIAPKSTLNNWLREINRWTPDVNAFILQGDKEERAELIQKKLLGCDFDVVIASYEIIIREKSPLKKINWEYIIIDEAHRIKNEESMLSQVLREFTSRNRLLITGTPLQNNLHELWALLNFLLPDIFSDAQDFDDWFSSESTEEDQDKIVKQLHTVLQPFLLRRIKSDVETSLLPKKELNLYVGMSSMQKKWYKKILEKDLDAVNGSNGSKESKTRLLNIMMQLRKCCNHPYLFDGAEPGPPYTTDEHLVYNAAKLQVLDKLLKKLKEEGSRVLIFSQMSRLLDILEDYCYFRNYEYCRIDGSTAHEDRIQAIDDYNAPDSKKFVFLLTTRAGGLGINLTSADVVVLYDSDWNPQADLQAMDRAHRIGQKKQVKVFRLVTDNSVEEKILERATQKLRLDQLVIQQNRTSLKKKENKADSKDALLSMIQHGAADVFKSGTSTGSAGTPEPGSGEKGDDIDLDELLLKSENKTKSLNAKYETLGLDDLQKFNQDSAYEWNGQDFKKKIQRDIISPLLLNPTKRERKENYSIDNYYKDVLNTGRSSTPSHPRMPKPHVFHSHQLQPPQLKVLYEKERMWTAKKTGYVPTMDDVKAAYGDISDEEEKKQKLELLKLSVNNSQPLTEEEEKMKADWESEGFTNWNKLEFRKFITVSGKYGRNSIQAIARELAPGKTLEEVRAYAKAFWSNIERIEDYEKYLKIIENEEEKIKRVKMQQEALRRKLSEYKNPFFDLKLKHPPSSNNKRTYSEEEDRFILLMLFKYGLDRDDVYELVRDEIRDCPLFELDFYFRSRTPVELARRGNTLLQCLEKEFNAGIVLDDATKDRMKKEDENGKRIREEFADQTANEKENVDGVESKKAKIEDTSNVGTEQLVAEKIPENETTH</sequence>
<organism>
    <name type="scientific">Saccharomyces cerevisiae (strain ATCC 204508 / S288c)</name>
    <name type="common">Baker's yeast</name>
    <dbReference type="NCBI Taxonomy" id="559292"/>
    <lineage>
        <taxon>Eukaryota</taxon>
        <taxon>Fungi</taxon>
        <taxon>Dikarya</taxon>
        <taxon>Ascomycota</taxon>
        <taxon>Saccharomycotina</taxon>
        <taxon>Saccharomycetes</taxon>
        <taxon>Saccharomycetales</taxon>
        <taxon>Saccharomycetaceae</taxon>
        <taxon>Saccharomyces</taxon>
    </lineage>
</organism>
<gene>
    <name type="primary">ISW1</name>
    <name type="ordered locus">YBR245C</name>
    <name type="ORF">YBR1633</name>
</gene>
<evidence type="ECO:0000255" key="1">
    <source>
        <dbReference type="PROSITE-ProRule" id="PRU00541"/>
    </source>
</evidence>
<evidence type="ECO:0000255" key="2">
    <source>
        <dbReference type="PROSITE-ProRule" id="PRU00542"/>
    </source>
</evidence>
<evidence type="ECO:0000255" key="3">
    <source>
        <dbReference type="PROSITE-ProRule" id="PRU00624"/>
    </source>
</evidence>
<evidence type="ECO:0000256" key="4">
    <source>
        <dbReference type="SAM" id="MobiDB-lite"/>
    </source>
</evidence>
<evidence type="ECO:0000269" key="5">
    <source>
    </source>
</evidence>
<evidence type="ECO:0000269" key="6">
    <source>
    </source>
</evidence>
<evidence type="ECO:0000269" key="7">
    <source>
    </source>
</evidence>
<evidence type="ECO:0000269" key="8">
    <source>
    </source>
</evidence>
<evidence type="ECO:0000269" key="9">
    <source>
    </source>
</evidence>
<evidence type="ECO:0000269" key="10">
    <source>
    </source>
</evidence>
<evidence type="ECO:0000305" key="11"/>
<evidence type="ECO:0007744" key="12">
    <source>
    </source>
</evidence>
<evidence type="ECO:0007744" key="13">
    <source>
    </source>
</evidence>
<evidence type="ECO:0007829" key="14">
    <source>
        <dbReference type="PDB" id="2Y9Y"/>
    </source>
</evidence>
<evidence type="ECO:0007829" key="15">
    <source>
        <dbReference type="PDB" id="6IRO"/>
    </source>
</evidence>
<evidence type="ECO:0007829" key="16">
    <source>
        <dbReference type="PDB" id="6JYL"/>
    </source>
</evidence>
<evidence type="ECO:0007829" key="17">
    <source>
        <dbReference type="PDB" id="7X3W"/>
    </source>
</evidence>